<comment type="function">
    <text evidence="2 4">The small GTPases Rab are key regulators of intracellular membrane trafficking, from the formation of transport vesicles to their fusion with membranes. Rabs cycle between an inactive GDP-bound form and an active GTP-bound form that is able to recruit to membranes different sets of downstream effectors directly responsible for vesicle formation, movement, tethering and fusion (By similarity). RAB12 may play a role in protein transport from recycling endosomes to lysosomes regulating, for instance, the degradation of the transferrin receptor. Involved in autophagy (By similarity).</text>
</comment>
<comment type="catalytic activity">
    <reaction evidence="4">
        <text>GTP + H2O = GDP + phosphate + H(+)</text>
        <dbReference type="Rhea" id="RHEA:19669"/>
        <dbReference type="ChEBI" id="CHEBI:15377"/>
        <dbReference type="ChEBI" id="CHEBI:15378"/>
        <dbReference type="ChEBI" id="CHEBI:37565"/>
        <dbReference type="ChEBI" id="CHEBI:43474"/>
        <dbReference type="ChEBI" id="CHEBI:58189"/>
        <dbReference type="EC" id="3.6.5.2"/>
    </reaction>
    <physiologicalReaction direction="left-to-right" evidence="4">
        <dbReference type="Rhea" id="RHEA:19670"/>
    </physiologicalReaction>
</comment>
<comment type="cofactor">
    <cofactor evidence="6">
        <name>Mg(2+)</name>
        <dbReference type="ChEBI" id="CHEBI:18420"/>
    </cofactor>
</comment>
<comment type="activity regulation">
    <text evidence="6 9">Regulated by guanine nucleotide exchange factors (GEFs) including DENND3 which promote the exchange of bound GDP for free GTP (By similarity). Regulated by GTPase activating proteins (GAPs) which increase the GTP hydrolysis activity. Inhibited by GDP dissociation inhibitors (GDIs) (Probable).</text>
</comment>
<comment type="subunit">
    <text evidence="6">Interacts with RABIF and OPTN (By similarity). Interacts with LRRK2; interaction facilitates phosphorylation of Ser-105 (By similarity). Interacts with GDI1, GDI2 and CHM; these interactions are disrupted by phosphorylation on Ser-105 (By similarity). Interacts with RILPL1 and RILPL2; these interactions are dependent on phosphorylation of Ser-105 (By similarity).</text>
</comment>
<comment type="subcellular location">
    <subcellularLocation>
        <location evidence="2">Recycling endosome membrane</location>
        <topology evidence="9">Lipid-anchor</topology>
        <orientation evidence="9">Cytoplasmic side</orientation>
    </subcellularLocation>
    <subcellularLocation>
        <location evidence="2">Lysosome membrane</location>
        <topology evidence="9">Lipid-anchor</topology>
        <orientation evidence="9">Cytoplasmic side</orientation>
    </subcellularLocation>
    <subcellularLocation>
        <location evidence="3">Golgi apparatus membrane</location>
    </subcellularLocation>
    <subcellularLocation>
        <location evidence="2">Cytoplasmic vesicle</location>
        <location evidence="2">Autophagosome</location>
    </subcellularLocation>
</comment>
<comment type="tissue specificity">
    <text evidence="8">Highest levels in skeletal and cardiac muscle. Also found in comparable amounts in brain, spinal cord and lung. Also detected in testis where it is expressed by Sertoli cells of the seminiferous tubules (at protein level).</text>
</comment>
<comment type="domain">
    <text evidence="5">Switch 1, switch 2 and the interswitch regions are characteristic of Rab GTPases and mediate the interactions with Rab downstream effectors. The switch regions undergo conformational changes upon nucleotide binding which drives interaction with specific sets of effector proteins, with most effectors only binding to GTP-bound Rab.</text>
</comment>
<comment type="PTM">
    <text evidence="6">Phosphorylation of Ser-105 in the switch II region by LRRK2 prevents the association of RAB regulatory proteins, including CHM and RAB GDP dissociation inhibitors GDI1 and GDI2.</text>
</comment>
<comment type="similarity">
    <text evidence="9">Belongs to the small GTPase superfamily. Rab family.</text>
</comment>
<protein>
    <recommendedName>
        <fullName>Ras-related protein Rab-12</fullName>
        <ecNumber evidence="4">3.6.5.2</ecNumber>
    </recommendedName>
</protein>
<evidence type="ECO:0000250" key="1"/>
<evidence type="ECO:0000250" key="2">
    <source>
        <dbReference type="UniProtKB" id="P35283"/>
    </source>
</evidence>
<evidence type="ECO:0000250" key="3">
    <source>
        <dbReference type="UniProtKB" id="P51152"/>
    </source>
</evidence>
<evidence type="ECO:0000250" key="4">
    <source>
        <dbReference type="UniProtKB" id="P61026"/>
    </source>
</evidence>
<evidence type="ECO:0000250" key="5">
    <source>
        <dbReference type="UniProtKB" id="P62820"/>
    </source>
</evidence>
<evidence type="ECO:0000250" key="6">
    <source>
        <dbReference type="UniProtKB" id="Q6IQ22"/>
    </source>
</evidence>
<evidence type="ECO:0000256" key="7">
    <source>
        <dbReference type="SAM" id="MobiDB-lite"/>
    </source>
</evidence>
<evidence type="ECO:0000269" key="8">
    <source>
    </source>
</evidence>
<evidence type="ECO:0000305" key="9"/>
<evidence type="ECO:0000312" key="10">
    <source>
        <dbReference type="RGD" id="3527"/>
    </source>
</evidence>
<evidence type="ECO:0007744" key="11">
    <source>
    </source>
</evidence>
<gene>
    <name evidence="10" type="primary">Rab12</name>
</gene>
<feature type="chain" id="PRO_0000121181" description="Ras-related protein Rab-12">
    <location>
        <begin position="1"/>
        <end position="243"/>
    </location>
</feature>
<feature type="region of interest" description="Disordered" evidence="7">
    <location>
        <begin position="1"/>
        <end position="36"/>
    </location>
</feature>
<feature type="short sequence motif" description="Switch 1" evidence="5">
    <location>
        <begin position="64"/>
        <end position="78"/>
    </location>
</feature>
<feature type="short sequence motif" description="Switch 2" evidence="5">
    <location>
        <begin position="96"/>
        <end position="113"/>
    </location>
</feature>
<feature type="binding site" evidence="4">
    <location>
        <position position="51"/>
    </location>
    <ligand>
        <name>GTP</name>
        <dbReference type="ChEBI" id="CHEBI:37565"/>
    </ligand>
</feature>
<feature type="binding site" evidence="4">
    <location>
        <position position="52"/>
    </location>
    <ligand>
        <name>GTP</name>
        <dbReference type="ChEBI" id="CHEBI:37565"/>
    </ligand>
</feature>
<feature type="binding site" evidence="4">
    <location>
        <position position="53"/>
    </location>
    <ligand>
        <name>GTP</name>
        <dbReference type="ChEBI" id="CHEBI:37565"/>
    </ligand>
</feature>
<feature type="binding site" evidence="4">
    <location>
        <position position="54"/>
    </location>
    <ligand>
        <name>GTP</name>
        <dbReference type="ChEBI" id="CHEBI:37565"/>
    </ligand>
</feature>
<feature type="binding site" evidence="4">
    <location>
        <position position="55"/>
    </location>
    <ligand>
        <name>GTP</name>
        <dbReference type="ChEBI" id="CHEBI:37565"/>
    </ligand>
</feature>
<feature type="binding site" evidence="6">
    <location>
        <position position="55"/>
    </location>
    <ligand>
        <name>Mg(2+)</name>
        <dbReference type="ChEBI" id="CHEBI:18420"/>
    </ligand>
</feature>
<feature type="binding site" evidence="4">
    <location>
        <position position="72"/>
    </location>
    <ligand>
        <name>GTP</name>
        <dbReference type="ChEBI" id="CHEBI:37565"/>
    </ligand>
</feature>
<feature type="binding site" evidence="4">
    <location>
        <position position="73"/>
    </location>
    <ligand>
        <name>GTP</name>
        <dbReference type="ChEBI" id="CHEBI:37565"/>
    </ligand>
</feature>
<feature type="binding site" evidence="4">
    <location>
        <position position="73"/>
    </location>
    <ligand>
        <name>Mg(2+)</name>
        <dbReference type="ChEBI" id="CHEBI:18420"/>
    </ligand>
</feature>
<feature type="binding site" evidence="4">
    <location>
        <position position="96"/>
    </location>
    <ligand>
        <name>Mg(2+)</name>
        <dbReference type="ChEBI" id="CHEBI:18420"/>
    </ligand>
</feature>
<feature type="binding site" evidence="4">
    <location>
        <position position="99"/>
    </location>
    <ligand>
        <name>GTP</name>
        <dbReference type="ChEBI" id="CHEBI:37565"/>
    </ligand>
</feature>
<feature type="binding site" evidence="4">
    <location>
        <position position="154"/>
    </location>
    <ligand>
        <name>GTP</name>
        <dbReference type="ChEBI" id="CHEBI:37565"/>
    </ligand>
</feature>
<feature type="binding site" evidence="4">
    <location>
        <position position="155"/>
    </location>
    <ligand>
        <name>GTP</name>
        <dbReference type="ChEBI" id="CHEBI:37565"/>
    </ligand>
</feature>
<feature type="binding site" evidence="4">
    <location>
        <position position="157"/>
    </location>
    <ligand>
        <name>GTP</name>
        <dbReference type="ChEBI" id="CHEBI:37565"/>
    </ligand>
</feature>
<feature type="binding site" evidence="4">
    <location>
        <position position="185"/>
    </location>
    <ligand>
        <name>GTP</name>
        <dbReference type="ChEBI" id="CHEBI:37565"/>
    </ligand>
</feature>
<feature type="binding site" evidence="4">
    <location>
        <position position="186"/>
    </location>
    <ligand>
        <name>GTP</name>
        <dbReference type="ChEBI" id="CHEBI:37565"/>
    </ligand>
</feature>
<feature type="binding site" evidence="4">
    <location>
        <position position="187"/>
    </location>
    <ligand>
        <name>GTP</name>
        <dbReference type="ChEBI" id="CHEBI:37565"/>
    </ligand>
</feature>
<feature type="modified residue" description="N-acetylmethionine" evidence="6">
    <location>
        <position position="1"/>
    </location>
</feature>
<feature type="modified residue" description="Phosphoserine" evidence="11">
    <location>
        <position position="20"/>
    </location>
</feature>
<feature type="modified residue" description="Phosphoserine" evidence="2">
    <location>
        <position position="24"/>
    </location>
</feature>
<feature type="modified residue" description="Phosphoserine" evidence="6">
    <location>
        <position position="105"/>
    </location>
</feature>
<feature type="lipid moiety-binding region" description="S-geranylgeranyl cysteine" evidence="1">
    <location>
        <position position="242"/>
    </location>
</feature>
<feature type="lipid moiety-binding region" description="S-geranylgeranyl cysteine" evidence="1">
    <location>
        <position position="243"/>
    </location>
</feature>
<feature type="sequence conflict" description="In Ref. 2; AAA41992." evidence="9" ref="2">
    <original>V</original>
    <variation>A</variation>
    <location>
        <position position="152"/>
    </location>
</feature>
<feature type="sequence conflict" description="In Ref. 2; AAA41992." evidence="9" ref="2">
    <original>F</original>
    <variation>L</variation>
    <location>
        <position position="181"/>
    </location>
</feature>
<feature type="sequence conflict" description="In Ref. 2; AAA41992." evidence="9" ref="2">
    <original>C</original>
    <variation>S</variation>
    <location>
        <position position="182"/>
    </location>
</feature>
<feature type="sequence conflict" description="In Ref. 2; AAA41992." evidence="9" ref="2">
    <original>A</original>
    <variation>P</variation>
    <location>
        <position position="184"/>
    </location>
</feature>
<accession>P35284</accession>
<reference key="1">
    <citation type="journal article" date="2004" name="Nature">
        <title>Genome sequence of the Brown Norway rat yields insights into mammalian evolution.</title>
        <authorList>
            <person name="Gibbs R.A."/>
            <person name="Weinstock G.M."/>
            <person name="Metzker M.L."/>
            <person name="Muzny D.M."/>
            <person name="Sodergren E.J."/>
            <person name="Scherer S."/>
            <person name="Scott G."/>
            <person name="Steffen D."/>
            <person name="Worley K.C."/>
            <person name="Burch P.E."/>
            <person name="Okwuonu G."/>
            <person name="Hines S."/>
            <person name="Lewis L."/>
            <person name="Deramo C."/>
            <person name="Delgado O."/>
            <person name="Dugan-Rocha S."/>
            <person name="Miner G."/>
            <person name="Morgan M."/>
            <person name="Hawes A."/>
            <person name="Gill R."/>
            <person name="Holt R.A."/>
            <person name="Adams M.D."/>
            <person name="Amanatides P.G."/>
            <person name="Baden-Tillson H."/>
            <person name="Barnstead M."/>
            <person name="Chin S."/>
            <person name="Evans C.A."/>
            <person name="Ferriera S."/>
            <person name="Fosler C."/>
            <person name="Glodek A."/>
            <person name="Gu Z."/>
            <person name="Jennings D."/>
            <person name="Kraft C.L."/>
            <person name="Nguyen T."/>
            <person name="Pfannkoch C.M."/>
            <person name="Sitter C."/>
            <person name="Sutton G.G."/>
            <person name="Venter J.C."/>
            <person name="Woodage T."/>
            <person name="Smith D."/>
            <person name="Lee H.-M."/>
            <person name="Gustafson E."/>
            <person name="Cahill P."/>
            <person name="Kana A."/>
            <person name="Doucette-Stamm L."/>
            <person name="Weinstock K."/>
            <person name="Fechtel K."/>
            <person name="Weiss R.B."/>
            <person name="Dunn D.M."/>
            <person name="Green E.D."/>
            <person name="Blakesley R.W."/>
            <person name="Bouffard G.G."/>
            <person name="De Jong P.J."/>
            <person name="Osoegawa K."/>
            <person name="Zhu B."/>
            <person name="Marra M."/>
            <person name="Schein J."/>
            <person name="Bosdet I."/>
            <person name="Fjell C."/>
            <person name="Jones S."/>
            <person name="Krzywinski M."/>
            <person name="Mathewson C."/>
            <person name="Siddiqui A."/>
            <person name="Wye N."/>
            <person name="McPherson J."/>
            <person name="Zhao S."/>
            <person name="Fraser C.M."/>
            <person name="Shetty J."/>
            <person name="Shatsman S."/>
            <person name="Geer K."/>
            <person name="Chen Y."/>
            <person name="Abramzon S."/>
            <person name="Nierman W.C."/>
            <person name="Havlak P.H."/>
            <person name="Chen R."/>
            <person name="Durbin K.J."/>
            <person name="Egan A."/>
            <person name="Ren Y."/>
            <person name="Song X.-Z."/>
            <person name="Li B."/>
            <person name="Liu Y."/>
            <person name="Qin X."/>
            <person name="Cawley S."/>
            <person name="Cooney A.J."/>
            <person name="D'Souza L.M."/>
            <person name="Martin K."/>
            <person name="Wu J.Q."/>
            <person name="Gonzalez-Garay M.L."/>
            <person name="Jackson A.R."/>
            <person name="Kalafus K.J."/>
            <person name="McLeod M.P."/>
            <person name="Milosavljevic A."/>
            <person name="Virk D."/>
            <person name="Volkov A."/>
            <person name="Wheeler D.A."/>
            <person name="Zhang Z."/>
            <person name="Bailey J.A."/>
            <person name="Eichler E.E."/>
            <person name="Tuzun E."/>
            <person name="Birney E."/>
            <person name="Mongin E."/>
            <person name="Ureta-Vidal A."/>
            <person name="Woodwark C."/>
            <person name="Zdobnov E."/>
            <person name="Bork P."/>
            <person name="Suyama M."/>
            <person name="Torrents D."/>
            <person name="Alexandersson M."/>
            <person name="Trask B.J."/>
            <person name="Young J.M."/>
            <person name="Huang H."/>
            <person name="Wang H."/>
            <person name="Xing H."/>
            <person name="Daniels S."/>
            <person name="Gietzen D."/>
            <person name="Schmidt J."/>
            <person name="Stevens K."/>
            <person name="Vitt U."/>
            <person name="Wingrove J."/>
            <person name="Camara F."/>
            <person name="Mar Alba M."/>
            <person name="Abril J.F."/>
            <person name="Guigo R."/>
            <person name="Smit A."/>
            <person name="Dubchak I."/>
            <person name="Rubin E.M."/>
            <person name="Couronne O."/>
            <person name="Poliakov A."/>
            <person name="Huebner N."/>
            <person name="Ganten D."/>
            <person name="Goesele C."/>
            <person name="Hummel O."/>
            <person name="Kreitler T."/>
            <person name="Lee Y.-A."/>
            <person name="Monti J."/>
            <person name="Schulz H."/>
            <person name="Zimdahl H."/>
            <person name="Himmelbauer H."/>
            <person name="Lehrach H."/>
            <person name="Jacob H.J."/>
            <person name="Bromberg S."/>
            <person name="Gullings-Handley J."/>
            <person name="Jensen-Seaman M.I."/>
            <person name="Kwitek A.E."/>
            <person name="Lazar J."/>
            <person name="Pasko D."/>
            <person name="Tonellato P.J."/>
            <person name="Twigger S."/>
            <person name="Ponting C.P."/>
            <person name="Duarte J.M."/>
            <person name="Rice S."/>
            <person name="Goodstadt L."/>
            <person name="Beatson S.A."/>
            <person name="Emes R.D."/>
            <person name="Winter E.E."/>
            <person name="Webber C."/>
            <person name="Brandt P."/>
            <person name="Nyakatura G."/>
            <person name="Adetobi M."/>
            <person name="Chiaromonte F."/>
            <person name="Elnitski L."/>
            <person name="Eswara P."/>
            <person name="Hardison R.C."/>
            <person name="Hou M."/>
            <person name="Kolbe D."/>
            <person name="Makova K."/>
            <person name="Miller W."/>
            <person name="Nekrutenko A."/>
            <person name="Riemer C."/>
            <person name="Schwartz S."/>
            <person name="Taylor J."/>
            <person name="Yang S."/>
            <person name="Zhang Y."/>
            <person name="Lindpaintner K."/>
            <person name="Andrews T.D."/>
            <person name="Caccamo M."/>
            <person name="Clamp M."/>
            <person name="Clarke L."/>
            <person name="Curwen V."/>
            <person name="Durbin R.M."/>
            <person name="Eyras E."/>
            <person name="Searle S.M."/>
            <person name="Cooper G.M."/>
            <person name="Batzoglou S."/>
            <person name="Brudno M."/>
            <person name="Sidow A."/>
            <person name="Stone E.A."/>
            <person name="Payseur B.A."/>
            <person name="Bourque G."/>
            <person name="Lopez-Otin C."/>
            <person name="Puente X.S."/>
            <person name="Chakrabarti K."/>
            <person name="Chatterji S."/>
            <person name="Dewey C."/>
            <person name="Pachter L."/>
            <person name="Bray N."/>
            <person name="Yap V.B."/>
            <person name="Caspi A."/>
            <person name="Tesler G."/>
            <person name="Pevzner P.A."/>
            <person name="Haussler D."/>
            <person name="Roskin K.M."/>
            <person name="Baertsch R."/>
            <person name="Clawson H."/>
            <person name="Furey T.S."/>
            <person name="Hinrichs A.S."/>
            <person name="Karolchik D."/>
            <person name="Kent W.J."/>
            <person name="Rosenbloom K.R."/>
            <person name="Trumbower H."/>
            <person name="Weirauch M."/>
            <person name="Cooper D.N."/>
            <person name="Stenson P.D."/>
            <person name="Ma B."/>
            <person name="Brent M."/>
            <person name="Arumugam M."/>
            <person name="Shteynberg D."/>
            <person name="Copley R.R."/>
            <person name="Taylor M.S."/>
            <person name="Riethman H."/>
            <person name="Mudunuri U."/>
            <person name="Peterson J."/>
            <person name="Guyer M."/>
            <person name="Felsenfeld A."/>
            <person name="Old S."/>
            <person name="Mockrin S."/>
            <person name="Collins F.S."/>
        </authorList>
    </citation>
    <scope>NUCLEOTIDE SEQUENCE [LARGE SCALE GENOMIC DNA]</scope>
    <source>
        <strain>Brown Norway</strain>
    </source>
</reference>
<reference key="2">
    <citation type="journal article" date="1992" name="J. Biol. Chem.">
        <title>Rab15, a novel low molecular weight GTP-binding protein specifically expressed in rat brain.</title>
        <authorList>
            <person name="Elferink L.A."/>
            <person name="Anzai K."/>
            <person name="Scheller R.H."/>
        </authorList>
    </citation>
    <scope>NUCLEOTIDE SEQUENCE [MRNA] OF 47-243</scope>
    <source>
        <strain>Sprague-Dawley</strain>
        <tissue>Brain</tissue>
    </source>
</reference>
<reference key="3">
    <citation type="journal article" date="2005" name="Mol. Reprod. Dev.">
        <title>Identification of rab12 as a vesicle-associated small GTPase highly expressed in Sertoli cells of rat testis.</title>
        <authorList>
            <person name="Iida H."/>
            <person name="Noda M."/>
            <person name="Kaneko T."/>
            <person name="Doiguchi M."/>
            <person name="Mori T."/>
        </authorList>
    </citation>
    <scope>TISSUE SPECIFICITY</scope>
</reference>
<reference key="4">
    <citation type="journal article" date="2012" name="Nat. Commun.">
        <title>Quantitative maps of protein phosphorylation sites across 14 different rat organs and tissues.</title>
        <authorList>
            <person name="Lundby A."/>
            <person name="Secher A."/>
            <person name="Lage K."/>
            <person name="Nordsborg N.B."/>
            <person name="Dmytriyev A."/>
            <person name="Lundby C."/>
            <person name="Olsen J.V."/>
        </authorList>
    </citation>
    <scope>PHOSPHORYLATION [LARGE SCALE ANALYSIS] AT SER-20</scope>
    <scope>IDENTIFICATION BY MASS SPECTROMETRY [LARGE SCALE ANALYSIS]</scope>
</reference>
<keyword id="KW-0007">Acetylation</keyword>
<keyword id="KW-0072">Autophagy</keyword>
<keyword id="KW-0968">Cytoplasmic vesicle</keyword>
<keyword id="KW-0967">Endosome</keyword>
<keyword id="KW-0333">Golgi apparatus</keyword>
<keyword id="KW-0342">GTP-binding</keyword>
<keyword id="KW-0378">Hydrolase</keyword>
<keyword id="KW-0449">Lipoprotein</keyword>
<keyword id="KW-0458">Lysosome</keyword>
<keyword id="KW-0460">Magnesium</keyword>
<keyword id="KW-0472">Membrane</keyword>
<keyword id="KW-0479">Metal-binding</keyword>
<keyword id="KW-0547">Nucleotide-binding</keyword>
<keyword id="KW-0597">Phosphoprotein</keyword>
<keyword id="KW-0636">Prenylation</keyword>
<keyword id="KW-0653">Protein transport</keyword>
<keyword id="KW-1185">Reference proteome</keyword>
<keyword id="KW-0813">Transport</keyword>
<organism>
    <name type="scientific">Rattus norvegicus</name>
    <name type="common">Rat</name>
    <dbReference type="NCBI Taxonomy" id="10116"/>
    <lineage>
        <taxon>Eukaryota</taxon>
        <taxon>Metazoa</taxon>
        <taxon>Chordata</taxon>
        <taxon>Craniata</taxon>
        <taxon>Vertebrata</taxon>
        <taxon>Euteleostomi</taxon>
        <taxon>Mammalia</taxon>
        <taxon>Eutheria</taxon>
        <taxon>Euarchontoglires</taxon>
        <taxon>Glires</taxon>
        <taxon>Rodentia</taxon>
        <taxon>Myomorpha</taxon>
        <taxon>Muroidea</taxon>
        <taxon>Muridae</taxon>
        <taxon>Murinae</taxon>
        <taxon>Rattus</taxon>
    </lineage>
</organism>
<dbReference type="EC" id="3.6.5.2" evidence="4"/>
<dbReference type="EMBL" id="M83676">
    <property type="protein sequence ID" value="AAA41992.1"/>
    <property type="molecule type" value="mRNA"/>
</dbReference>
<dbReference type="PIR" id="C42148">
    <property type="entry name" value="C42148"/>
</dbReference>
<dbReference type="RefSeq" id="NP_037149.1">
    <property type="nucleotide sequence ID" value="NM_013017.1"/>
</dbReference>
<dbReference type="SMR" id="P35284"/>
<dbReference type="DIP" id="DIP-36918N"/>
<dbReference type="FunCoup" id="P35284">
    <property type="interactions" value="429"/>
</dbReference>
<dbReference type="IntAct" id="P35284">
    <property type="interactions" value="2"/>
</dbReference>
<dbReference type="STRING" id="10116.ENSRNOP00000059602"/>
<dbReference type="iPTMnet" id="P35284"/>
<dbReference type="PhosphoSitePlus" id="P35284"/>
<dbReference type="jPOST" id="P35284"/>
<dbReference type="PaxDb" id="10116-ENSRNOP00000059602"/>
<dbReference type="GeneID" id="25530"/>
<dbReference type="KEGG" id="rno:25530"/>
<dbReference type="AGR" id="RGD:3527"/>
<dbReference type="CTD" id="201475"/>
<dbReference type="RGD" id="3527">
    <property type="gene designation" value="Rab12"/>
</dbReference>
<dbReference type="eggNOG" id="KOG0078">
    <property type="taxonomic scope" value="Eukaryota"/>
</dbReference>
<dbReference type="InParanoid" id="P35284"/>
<dbReference type="OrthoDB" id="53890at9989"/>
<dbReference type="Reactome" id="R-RNO-8873719">
    <property type="pathway name" value="RAB geranylgeranylation"/>
</dbReference>
<dbReference type="Reactome" id="R-RNO-8876198">
    <property type="pathway name" value="RAB GEFs exchange GTP for GDP on RABs"/>
</dbReference>
<dbReference type="PRO" id="PR:P35284"/>
<dbReference type="Proteomes" id="UP000002494">
    <property type="component" value="Unplaced"/>
</dbReference>
<dbReference type="GO" id="GO:0005776">
    <property type="term" value="C:autophagosome"/>
    <property type="evidence" value="ECO:0000266"/>
    <property type="project" value="RGD"/>
</dbReference>
<dbReference type="GO" id="GO:0005768">
    <property type="term" value="C:endosome"/>
    <property type="evidence" value="ECO:0000318"/>
    <property type="project" value="GO_Central"/>
</dbReference>
<dbReference type="GO" id="GO:0000139">
    <property type="term" value="C:Golgi membrane"/>
    <property type="evidence" value="ECO:0007669"/>
    <property type="project" value="UniProtKB-SubCell"/>
</dbReference>
<dbReference type="GO" id="GO:0005765">
    <property type="term" value="C:lysosomal membrane"/>
    <property type="evidence" value="ECO:0007669"/>
    <property type="project" value="UniProtKB-SubCell"/>
</dbReference>
<dbReference type="GO" id="GO:0005764">
    <property type="term" value="C:lysosome"/>
    <property type="evidence" value="ECO:0000250"/>
    <property type="project" value="UniProtKB"/>
</dbReference>
<dbReference type="GO" id="GO:0045335">
    <property type="term" value="C:phagocytic vesicle"/>
    <property type="evidence" value="ECO:0000266"/>
    <property type="project" value="RGD"/>
</dbReference>
<dbReference type="GO" id="GO:0005886">
    <property type="term" value="C:plasma membrane"/>
    <property type="evidence" value="ECO:0000318"/>
    <property type="project" value="GO_Central"/>
</dbReference>
<dbReference type="GO" id="GO:0055038">
    <property type="term" value="C:recycling endosome membrane"/>
    <property type="evidence" value="ECO:0000250"/>
    <property type="project" value="UniProtKB"/>
</dbReference>
<dbReference type="GO" id="GO:0030141">
    <property type="term" value="C:secretory granule"/>
    <property type="evidence" value="ECO:0000314"/>
    <property type="project" value="RGD"/>
</dbReference>
<dbReference type="GO" id="GO:0008021">
    <property type="term" value="C:synaptic vesicle"/>
    <property type="evidence" value="ECO:0000318"/>
    <property type="project" value="GO_Central"/>
</dbReference>
<dbReference type="GO" id="GO:0030140">
    <property type="term" value="C:trans-Golgi network transport vesicle"/>
    <property type="evidence" value="ECO:0000318"/>
    <property type="project" value="GO_Central"/>
</dbReference>
<dbReference type="GO" id="GO:0019003">
    <property type="term" value="F:GDP binding"/>
    <property type="evidence" value="ECO:0000250"/>
    <property type="project" value="UniProtKB"/>
</dbReference>
<dbReference type="GO" id="GO:0005525">
    <property type="term" value="F:GTP binding"/>
    <property type="evidence" value="ECO:0000304"/>
    <property type="project" value="RGD"/>
</dbReference>
<dbReference type="GO" id="GO:0003924">
    <property type="term" value="F:GTPase activity"/>
    <property type="evidence" value="ECO:0000318"/>
    <property type="project" value="GO_Central"/>
</dbReference>
<dbReference type="GO" id="GO:0006914">
    <property type="term" value="P:autophagy"/>
    <property type="evidence" value="ECO:0007669"/>
    <property type="project" value="UniProtKB-KW"/>
</dbReference>
<dbReference type="GO" id="GO:0071346">
    <property type="term" value="P:cellular response to type II interferon"/>
    <property type="evidence" value="ECO:0000266"/>
    <property type="project" value="RGD"/>
</dbReference>
<dbReference type="GO" id="GO:0032456">
    <property type="term" value="P:endocytic recycling"/>
    <property type="evidence" value="ECO:0000318"/>
    <property type="project" value="GO_Central"/>
</dbReference>
<dbReference type="GO" id="GO:0008333">
    <property type="term" value="P:endosome to lysosome transport"/>
    <property type="evidence" value="ECO:0000250"/>
    <property type="project" value="UniProtKB"/>
</dbReference>
<dbReference type="GO" id="GO:0006887">
    <property type="term" value="P:exocytosis"/>
    <property type="evidence" value="ECO:0000318"/>
    <property type="project" value="GO_Central"/>
</dbReference>
<dbReference type="GO" id="GO:0016239">
    <property type="term" value="P:positive regulation of macroautophagy"/>
    <property type="evidence" value="ECO:0000266"/>
    <property type="project" value="RGD"/>
</dbReference>
<dbReference type="GO" id="GO:0030163">
    <property type="term" value="P:protein catabolic process"/>
    <property type="evidence" value="ECO:0000250"/>
    <property type="project" value="UniProtKB"/>
</dbReference>
<dbReference type="GO" id="GO:0015031">
    <property type="term" value="P:protein transport"/>
    <property type="evidence" value="ECO:0007669"/>
    <property type="project" value="UniProtKB-KW"/>
</dbReference>
<dbReference type="GO" id="GO:0032482">
    <property type="term" value="P:Rab protein signal transduction"/>
    <property type="evidence" value="ECO:0007669"/>
    <property type="project" value="InterPro"/>
</dbReference>
<dbReference type="CDD" id="cd04120">
    <property type="entry name" value="Rab12"/>
    <property type="match status" value="1"/>
</dbReference>
<dbReference type="FunFam" id="3.40.50.300:FF:000568">
    <property type="entry name" value="Putative Ras-related protein Rab-12"/>
    <property type="match status" value="1"/>
</dbReference>
<dbReference type="Gene3D" id="3.40.50.300">
    <property type="entry name" value="P-loop containing nucleotide triphosphate hydrolases"/>
    <property type="match status" value="1"/>
</dbReference>
<dbReference type="InterPro" id="IPR027417">
    <property type="entry name" value="P-loop_NTPase"/>
</dbReference>
<dbReference type="InterPro" id="IPR041830">
    <property type="entry name" value="Rab12"/>
</dbReference>
<dbReference type="InterPro" id="IPR005225">
    <property type="entry name" value="Small_GTP-bd"/>
</dbReference>
<dbReference type="InterPro" id="IPR001806">
    <property type="entry name" value="Small_GTPase"/>
</dbReference>
<dbReference type="InterPro" id="IPR050305">
    <property type="entry name" value="Small_GTPase_Rab"/>
</dbReference>
<dbReference type="NCBIfam" id="TIGR00231">
    <property type="entry name" value="small_GTP"/>
    <property type="match status" value="1"/>
</dbReference>
<dbReference type="PANTHER" id="PTHR47980">
    <property type="entry name" value="LD44762P"/>
    <property type="match status" value="1"/>
</dbReference>
<dbReference type="Pfam" id="PF00071">
    <property type="entry name" value="Ras"/>
    <property type="match status" value="1"/>
</dbReference>
<dbReference type="PRINTS" id="PR00449">
    <property type="entry name" value="RASTRNSFRMNG"/>
</dbReference>
<dbReference type="SMART" id="SM00175">
    <property type="entry name" value="RAB"/>
    <property type="match status" value="1"/>
</dbReference>
<dbReference type="SMART" id="SM00176">
    <property type="entry name" value="RAN"/>
    <property type="match status" value="1"/>
</dbReference>
<dbReference type="SMART" id="SM00173">
    <property type="entry name" value="RAS"/>
    <property type="match status" value="1"/>
</dbReference>
<dbReference type="SMART" id="SM00174">
    <property type="entry name" value="RHO"/>
    <property type="match status" value="1"/>
</dbReference>
<dbReference type="SUPFAM" id="SSF52540">
    <property type="entry name" value="P-loop containing nucleoside triphosphate hydrolases"/>
    <property type="match status" value="1"/>
</dbReference>
<dbReference type="PROSITE" id="PS51419">
    <property type="entry name" value="RAB"/>
    <property type="match status" value="1"/>
</dbReference>
<name>RAB12_RAT</name>
<sequence>MDPSAALHRRPAGGGLGAVSPALSGGQARRRKQPPRPADFKLQVIIIGSRGVGKTSLMERFTDDTFCEACKSTVGVDFKIKTVELRGKKIRLQIWDTAGQERFNSITSAYYRSAKGIILVYDITKKETFDDLPKWMKMIDKYASEDAELLLVGNKLDCETDREISRQQGEKFAQQITGMRFCEASAKDNFNVDEIFLKLVDDILKKMPLDVLRSELSNSILSLQPEPEIPPELPPPRPHVRCC</sequence>
<proteinExistence type="evidence at protein level"/>